<comment type="miscellaneous">
    <text>Despite the presence of the tlyC gene, the true SFG rickettsiae are non-hemolytic.</text>
</comment>
<comment type="similarity">
    <text evidence="2">Belongs to the UPF0053 family. Hemolysin C subfamily.</text>
</comment>
<evidence type="ECO:0000255" key="1">
    <source>
        <dbReference type="PROSITE-ProRule" id="PRU00703"/>
    </source>
</evidence>
<evidence type="ECO:0000305" key="2"/>
<keyword id="KW-0129">CBS domain</keyword>
<keyword id="KW-0677">Repeat</keyword>
<organism>
    <name type="scientific">Rickettsia conorii (strain ATCC VR-613 / Malish 7)</name>
    <dbReference type="NCBI Taxonomy" id="272944"/>
    <lineage>
        <taxon>Bacteria</taxon>
        <taxon>Pseudomonadati</taxon>
        <taxon>Pseudomonadota</taxon>
        <taxon>Alphaproteobacteria</taxon>
        <taxon>Rickettsiales</taxon>
        <taxon>Rickettsiaceae</taxon>
        <taxon>Rickettsieae</taxon>
        <taxon>Rickettsia</taxon>
        <taxon>spotted fever group</taxon>
    </lineage>
</organism>
<name>HLYC_RICCN</name>
<proteinExistence type="inferred from homology"/>
<feature type="chain" id="PRO_0000319030" description="Hemolysin C homolog">
    <location>
        <begin position="1"/>
        <end position="299"/>
    </location>
</feature>
<feature type="domain" description="CBS 1" evidence="1">
    <location>
        <begin position="80"/>
        <end position="142"/>
    </location>
</feature>
<feature type="domain" description="CBS 2" evidence="1">
    <location>
        <begin position="145"/>
        <end position="202"/>
    </location>
</feature>
<sequence>MLKSSKKEDSSKKNQNNKLIFTVRKLFSPIKNFFRKTKTPDNFFGVIKRLKINSQKMTLDERNILANLLELEDKTIEDIMVPRSDIAAIKLTTNLEELSESIKLEVPHTRTLIYDGTLDNVVGFIHIKDLFKALATKQNGRLKKLIRKHIIAAPSMKLLDLLAKMRRERTHIAIVVDEYGGTDGLVTIEDLIEEIVGRIDDEHDQQLDSDNFKVINNSTIIANARVEVEVLEEIIGEKLHNDYDEFDTIGGLVLTRVSSVPAIGTRIDISENIEIEVTDATPRSLKQVKIRLKNGLNGQ</sequence>
<accession>Q92GI2</accession>
<protein>
    <recommendedName>
        <fullName>Hemolysin C homolog</fullName>
    </recommendedName>
</protein>
<reference key="1">
    <citation type="journal article" date="2001" name="Science">
        <title>Mechanisms of evolution in Rickettsia conorii and R. prowazekii.</title>
        <authorList>
            <person name="Ogata H."/>
            <person name="Audic S."/>
            <person name="Renesto-Audiffren P."/>
            <person name="Fournier P.-E."/>
            <person name="Barbe V."/>
            <person name="Samson D."/>
            <person name="Roux V."/>
            <person name="Cossart P."/>
            <person name="Weissenbach J."/>
            <person name="Claverie J.-M."/>
            <person name="Raoult D."/>
        </authorList>
    </citation>
    <scope>NUCLEOTIDE SEQUENCE [LARGE SCALE GENOMIC DNA]</scope>
    <source>
        <strain>ATCC VR-613 / Malish 7</strain>
    </source>
</reference>
<gene>
    <name type="primary">tlyC</name>
    <name type="ordered locus">RC1141</name>
</gene>
<dbReference type="EMBL" id="AE006914">
    <property type="protein sequence ID" value="AAL03679.1"/>
    <property type="molecule type" value="Genomic_DNA"/>
</dbReference>
<dbReference type="PIR" id="E97842">
    <property type="entry name" value="E97842"/>
</dbReference>
<dbReference type="RefSeq" id="WP_010977712.1">
    <property type="nucleotide sequence ID" value="NC_003103.1"/>
</dbReference>
<dbReference type="SMR" id="Q92GI2"/>
<dbReference type="GeneID" id="928291"/>
<dbReference type="KEGG" id="rco:RC1141"/>
<dbReference type="PATRIC" id="fig|272944.4.peg.1315"/>
<dbReference type="HOGENOM" id="CLU_015237_3_1_5"/>
<dbReference type="Proteomes" id="UP000000816">
    <property type="component" value="Chromosome"/>
</dbReference>
<dbReference type="GO" id="GO:0005886">
    <property type="term" value="C:plasma membrane"/>
    <property type="evidence" value="ECO:0007669"/>
    <property type="project" value="TreeGrafter"/>
</dbReference>
<dbReference type="GO" id="GO:0050660">
    <property type="term" value="F:flavin adenine dinucleotide binding"/>
    <property type="evidence" value="ECO:0007669"/>
    <property type="project" value="InterPro"/>
</dbReference>
<dbReference type="CDD" id="cd04590">
    <property type="entry name" value="CBS_pair_CorC_HlyC_assoc"/>
    <property type="match status" value="1"/>
</dbReference>
<dbReference type="FunFam" id="3.10.580.10:FF:000002">
    <property type="entry name" value="Magnesium/cobalt efflux protein CorC"/>
    <property type="match status" value="1"/>
</dbReference>
<dbReference type="Gene3D" id="3.30.465.10">
    <property type="match status" value="1"/>
</dbReference>
<dbReference type="Gene3D" id="3.10.580.10">
    <property type="entry name" value="CBS-domain"/>
    <property type="match status" value="1"/>
</dbReference>
<dbReference type="InterPro" id="IPR000644">
    <property type="entry name" value="CBS_dom"/>
</dbReference>
<dbReference type="InterPro" id="IPR046342">
    <property type="entry name" value="CBS_dom_sf"/>
</dbReference>
<dbReference type="InterPro" id="IPR036318">
    <property type="entry name" value="FAD-bd_PCMH-like_sf"/>
</dbReference>
<dbReference type="InterPro" id="IPR016169">
    <property type="entry name" value="FAD-bd_PCMH_sub2"/>
</dbReference>
<dbReference type="InterPro" id="IPR044751">
    <property type="entry name" value="Ion_transp-like_CBS"/>
</dbReference>
<dbReference type="InterPro" id="IPR005170">
    <property type="entry name" value="Transptr-assoc_dom"/>
</dbReference>
<dbReference type="PANTHER" id="PTHR22777">
    <property type="entry name" value="HEMOLYSIN-RELATED"/>
    <property type="match status" value="1"/>
</dbReference>
<dbReference type="PANTHER" id="PTHR22777:SF27">
    <property type="entry name" value="MAGNESIUM AND COBALT EFFLUX PROTEIN CORC"/>
    <property type="match status" value="1"/>
</dbReference>
<dbReference type="Pfam" id="PF00571">
    <property type="entry name" value="CBS"/>
    <property type="match status" value="1"/>
</dbReference>
<dbReference type="Pfam" id="PF03471">
    <property type="entry name" value="CorC_HlyC"/>
    <property type="match status" value="1"/>
</dbReference>
<dbReference type="SMART" id="SM01091">
    <property type="entry name" value="CorC_HlyC"/>
    <property type="match status" value="1"/>
</dbReference>
<dbReference type="SUPFAM" id="SSF54631">
    <property type="entry name" value="CBS-domain pair"/>
    <property type="match status" value="1"/>
</dbReference>
<dbReference type="SUPFAM" id="SSF56176">
    <property type="entry name" value="FAD-binding/transporter-associated domain-like"/>
    <property type="match status" value="1"/>
</dbReference>
<dbReference type="PROSITE" id="PS51371">
    <property type="entry name" value="CBS"/>
    <property type="match status" value="2"/>
</dbReference>